<dbReference type="EC" id="2.3.1.15" evidence="1"/>
<dbReference type="EC" id="2.3.1.n5" evidence="1"/>
<dbReference type="EMBL" id="AE005174">
    <property type="protein sequence ID" value="AAG58193.1"/>
    <property type="molecule type" value="Genomic_DNA"/>
</dbReference>
<dbReference type="EMBL" id="BA000007">
    <property type="protein sequence ID" value="BAB37365.1"/>
    <property type="molecule type" value="Genomic_DNA"/>
</dbReference>
<dbReference type="PIR" id="E85966">
    <property type="entry name" value="E85966"/>
</dbReference>
<dbReference type="PIR" id="F91121">
    <property type="entry name" value="F91121"/>
</dbReference>
<dbReference type="RefSeq" id="NP_311969.1">
    <property type="nucleotide sequence ID" value="NC_002695.1"/>
</dbReference>
<dbReference type="RefSeq" id="WP_001272796.1">
    <property type="nucleotide sequence ID" value="NZ_VOAI01000009.1"/>
</dbReference>
<dbReference type="SMR" id="P60784"/>
<dbReference type="STRING" id="155864.Z4412"/>
<dbReference type="GeneID" id="916130"/>
<dbReference type="GeneID" id="93778934"/>
<dbReference type="KEGG" id="ece:Z4412"/>
<dbReference type="KEGG" id="ecs:ECs_3942"/>
<dbReference type="PATRIC" id="fig|386585.9.peg.4111"/>
<dbReference type="eggNOG" id="COG0344">
    <property type="taxonomic scope" value="Bacteria"/>
</dbReference>
<dbReference type="HOGENOM" id="CLU_081254_0_2_6"/>
<dbReference type="OMA" id="PVWLGFK"/>
<dbReference type="UniPathway" id="UPA00085"/>
<dbReference type="Proteomes" id="UP000000558">
    <property type="component" value="Chromosome"/>
</dbReference>
<dbReference type="Proteomes" id="UP000002519">
    <property type="component" value="Chromosome"/>
</dbReference>
<dbReference type="GO" id="GO:0005886">
    <property type="term" value="C:plasma membrane"/>
    <property type="evidence" value="ECO:0007669"/>
    <property type="project" value="UniProtKB-SubCell"/>
</dbReference>
<dbReference type="GO" id="GO:0043772">
    <property type="term" value="F:acyl-phosphate glycerol-3-phosphate acyltransferase activity"/>
    <property type="evidence" value="ECO:0007669"/>
    <property type="project" value="InterPro"/>
</dbReference>
<dbReference type="GO" id="GO:0004366">
    <property type="term" value="F:glycerol-3-phosphate O-acyltransferase activity"/>
    <property type="evidence" value="ECO:0007669"/>
    <property type="project" value="UniProtKB-UniRule"/>
</dbReference>
<dbReference type="GO" id="GO:0008654">
    <property type="term" value="P:phospholipid biosynthetic process"/>
    <property type="evidence" value="ECO:0007669"/>
    <property type="project" value="UniProtKB-UniRule"/>
</dbReference>
<dbReference type="HAMAP" id="MF_01043">
    <property type="entry name" value="PlsY"/>
    <property type="match status" value="1"/>
</dbReference>
<dbReference type="InterPro" id="IPR003811">
    <property type="entry name" value="G3P_acylTferase_PlsY"/>
</dbReference>
<dbReference type="NCBIfam" id="TIGR00023">
    <property type="entry name" value="glycerol-3-phosphate 1-O-acyltransferase PlsY"/>
    <property type="match status" value="1"/>
</dbReference>
<dbReference type="PANTHER" id="PTHR30309:SF0">
    <property type="entry name" value="GLYCEROL-3-PHOSPHATE ACYLTRANSFERASE-RELATED"/>
    <property type="match status" value="1"/>
</dbReference>
<dbReference type="PANTHER" id="PTHR30309">
    <property type="entry name" value="INNER MEMBRANE PROTEIN YGIH"/>
    <property type="match status" value="1"/>
</dbReference>
<dbReference type="Pfam" id="PF02660">
    <property type="entry name" value="G3P_acyltransf"/>
    <property type="match status" value="1"/>
</dbReference>
<dbReference type="SMART" id="SM01207">
    <property type="entry name" value="G3P_acyltransf"/>
    <property type="match status" value="1"/>
</dbReference>
<feature type="chain" id="PRO_0000188369" description="Glycerol-3-phosphate acyltransferase">
    <location>
        <begin position="1"/>
        <end position="205"/>
    </location>
</feature>
<feature type="topological domain" description="Periplasmic" evidence="1">
    <location>
        <begin position="1"/>
        <end position="3"/>
    </location>
</feature>
<feature type="transmembrane region" description="Helical" evidence="1">
    <location>
        <begin position="4"/>
        <end position="24"/>
    </location>
</feature>
<feature type="topological domain" description="Cytoplasmic" evidence="1">
    <location>
        <begin position="25"/>
        <end position="52"/>
    </location>
</feature>
<feature type="transmembrane region" description="Helical" evidence="1">
    <location>
        <begin position="53"/>
        <end position="73"/>
    </location>
</feature>
<feature type="topological domain" description="Periplasmic" evidence="1">
    <location>
        <begin position="74"/>
        <end position="80"/>
    </location>
</feature>
<feature type="transmembrane region" description="Helical" evidence="1">
    <location>
        <begin position="81"/>
        <end position="101"/>
    </location>
</feature>
<feature type="topological domain" description="Cytoplasmic" evidence="1">
    <location>
        <begin position="102"/>
        <end position="111"/>
    </location>
</feature>
<feature type="transmembrane region" description="Helical" evidence="1">
    <location>
        <begin position="112"/>
        <end position="132"/>
    </location>
</feature>
<feature type="topological domain" description="Periplasmic" evidence="1">
    <location>
        <begin position="133"/>
        <end position="137"/>
    </location>
</feature>
<feature type="transmembrane region" description="Helical" evidence="1">
    <location>
        <begin position="138"/>
        <end position="158"/>
    </location>
</feature>
<feature type="topological domain" description="Cytoplasmic" evidence="1">
    <location>
        <begin position="159"/>
        <end position="205"/>
    </location>
</feature>
<protein>
    <recommendedName>
        <fullName evidence="1">Glycerol-3-phosphate acyltransferase</fullName>
    </recommendedName>
    <alternativeName>
        <fullName evidence="1">G3P acyltransferase</fullName>
        <shortName evidence="1">GPAT</shortName>
        <ecNumber evidence="1">2.3.1.15</ecNumber>
        <ecNumber evidence="1">2.3.1.n5</ecNumber>
    </alternativeName>
    <alternativeName>
        <fullName evidence="1">Lysophosphatidic acid synthase</fullName>
        <shortName evidence="1">LPA synthase</shortName>
    </alternativeName>
</protein>
<proteinExistence type="inferred from homology"/>
<organism>
    <name type="scientific">Escherichia coli O157:H7</name>
    <dbReference type="NCBI Taxonomy" id="83334"/>
    <lineage>
        <taxon>Bacteria</taxon>
        <taxon>Pseudomonadati</taxon>
        <taxon>Pseudomonadota</taxon>
        <taxon>Gammaproteobacteria</taxon>
        <taxon>Enterobacterales</taxon>
        <taxon>Enterobacteriaceae</taxon>
        <taxon>Escherichia</taxon>
    </lineage>
</organism>
<reference key="1">
    <citation type="journal article" date="2001" name="Nature">
        <title>Genome sequence of enterohaemorrhagic Escherichia coli O157:H7.</title>
        <authorList>
            <person name="Perna N.T."/>
            <person name="Plunkett G. III"/>
            <person name="Burland V."/>
            <person name="Mau B."/>
            <person name="Glasner J.D."/>
            <person name="Rose D.J."/>
            <person name="Mayhew G.F."/>
            <person name="Evans P.S."/>
            <person name="Gregor J."/>
            <person name="Kirkpatrick H.A."/>
            <person name="Posfai G."/>
            <person name="Hackett J."/>
            <person name="Klink S."/>
            <person name="Boutin A."/>
            <person name="Shao Y."/>
            <person name="Miller L."/>
            <person name="Grotbeck E.J."/>
            <person name="Davis N.W."/>
            <person name="Lim A."/>
            <person name="Dimalanta E.T."/>
            <person name="Potamousis K."/>
            <person name="Apodaca J."/>
            <person name="Anantharaman T.S."/>
            <person name="Lin J."/>
            <person name="Yen G."/>
            <person name="Schwartz D.C."/>
            <person name="Welch R.A."/>
            <person name="Blattner F.R."/>
        </authorList>
    </citation>
    <scope>NUCLEOTIDE SEQUENCE [LARGE SCALE GENOMIC DNA]</scope>
    <source>
        <strain>O157:H7 / EDL933 / ATCC 700927 / EHEC</strain>
    </source>
</reference>
<reference key="2">
    <citation type="journal article" date="2001" name="DNA Res.">
        <title>Complete genome sequence of enterohemorrhagic Escherichia coli O157:H7 and genomic comparison with a laboratory strain K-12.</title>
        <authorList>
            <person name="Hayashi T."/>
            <person name="Makino K."/>
            <person name="Ohnishi M."/>
            <person name="Kurokawa K."/>
            <person name="Ishii K."/>
            <person name="Yokoyama K."/>
            <person name="Han C.-G."/>
            <person name="Ohtsubo E."/>
            <person name="Nakayama K."/>
            <person name="Murata T."/>
            <person name="Tanaka M."/>
            <person name="Tobe T."/>
            <person name="Iida T."/>
            <person name="Takami H."/>
            <person name="Honda T."/>
            <person name="Sasakawa C."/>
            <person name="Ogasawara N."/>
            <person name="Yasunaga T."/>
            <person name="Kuhara S."/>
            <person name="Shiba T."/>
            <person name="Hattori M."/>
            <person name="Shinagawa H."/>
        </authorList>
    </citation>
    <scope>NUCLEOTIDE SEQUENCE [LARGE SCALE GENOMIC DNA]</scope>
    <source>
        <strain>O157:H7 / Sakai / RIMD 0509952 / EHEC</strain>
    </source>
</reference>
<comment type="function">
    <text evidence="1">Catalyzes the transfer of an acyl group from acyl-ACP to glycerol-3-phosphate (G3P) to form lysophosphatidic acid (LPA). This enzyme can also utilize acyl-CoA as fatty acyl donor, but not acyl-PO(4).</text>
</comment>
<comment type="catalytic activity">
    <reaction evidence="1">
        <text>sn-glycerol 3-phosphate + an acyl-CoA = a 1-acyl-sn-glycero-3-phosphate + CoA</text>
        <dbReference type="Rhea" id="RHEA:15325"/>
        <dbReference type="ChEBI" id="CHEBI:57287"/>
        <dbReference type="ChEBI" id="CHEBI:57597"/>
        <dbReference type="ChEBI" id="CHEBI:57970"/>
        <dbReference type="ChEBI" id="CHEBI:58342"/>
        <dbReference type="EC" id="2.3.1.15"/>
    </reaction>
</comment>
<comment type="catalytic activity">
    <reaction evidence="1">
        <text>a fatty acyl-[ACP] + sn-glycerol 3-phosphate = a 1-acyl-sn-glycero-3-phosphate + holo-[ACP]</text>
        <dbReference type="Rhea" id="RHEA:42300"/>
        <dbReference type="Rhea" id="RHEA-COMP:9685"/>
        <dbReference type="Rhea" id="RHEA-COMP:14125"/>
        <dbReference type="ChEBI" id="CHEBI:57597"/>
        <dbReference type="ChEBI" id="CHEBI:57970"/>
        <dbReference type="ChEBI" id="CHEBI:64479"/>
        <dbReference type="ChEBI" id="CHEBI:138651"/>
        <dbReference type="EC" id="2.3.1.n5"/>
    </reaction>
</comment>
<comment type="pathway">
    <text evidence="1">Lipid metabolism; phospholipid metabolism.</text>
</comment>
<comment type="subunit">
    <text evidence="1">Probably interacts with PlsX.</text>
</comment>
<comment type="subcellular location">
    <subcellularLocation>
        <location evidence="1">Cell inner membrane</location>
        <topology evidence="1">Multi-pass membrane protein</topology>
    </subcellularLocation>
</comment>
<comment type="similarity">
    <text evidence="1">Belongs to the PlsY family.</text>
</comment>
<evidence type="ECO:0000255" key="1">
    <source>
        <dbReference type="HAMAP-Rule" id="MF_01043"/>
    </source>
</evidence>
<gene>
    <name evidence="1" type="primary">plsY</name>
    <name type="synonym">ygiH</name>
    <name type="ordered locus">Z4412</name>
    <name type="ordered locus">ECs3942</name>
</gene>
<name>PLSY_ECO57</name>
<sequence>MSAIAPGMILIAYLCGSISSAILVCRLCGLPDPRTSGSGNPGATNVLRIGGKGAAVAVLIFDVLKGMLPVWGAYELGVSPFWLGLIAIAACLGHIWPVFFGFKGGKGVATAFGAIAPIGWDLTGVMAGTWLLTVLLSGYSSLGAIVSALIAPFYVWWFKPQFTFPVSMLSCLILLRHHDNIQRLWRRQETKIWTKFKRKREKDPE</sequence>
<accession>P60784</accession>
<accession>P31056</accession>
<keyword id="KW-0997">Cell inner membrane</keyword>
<keyword id="KW-1003">Cell membrane</keyword>
<keyword id="KW-0444">Lipid biosynthesis</keyword>
<keyword id="KW-0443">Lipid metabolism</keyword>
<keyword id="KW-0472">Membrane</keyword>
<keyword id="KW-0594">Phospholipid biosynthesis</keyword>
<keyword id="KW-1208">Phospholipid metabolism</keyword>
<keyword id="KW-1185">Reference proteome</keyword>
<keyword id="KW-0808">Transferase</keyword>
<keyword id="KW-0812">Transmembrane</keyword>
<keyword id="KW-1133">Transmembrane helix</keyword>